<sequence>MSNVSEERRKRQQNIKEGLQFIQSPLSYPGTQEQYAVYLRALVRNLFNEGNDVYREHDWNNSISQYTEALNIADYAKSEEILIPKEIIEKLYINRIACYSNMGFHDKVLEDCNIVLSLNASNCKALYRKSKALSDLGRYKKAYDAVAKCSLAVPQDEHVIKLTQELAQKLGFKIRKAYVRAELSLKSVPGDGATKALNHSVEDIEPDLLTPRQEAVPVVSLPAPSFSHEVGSELASVPVMPLTSILPLQVEESALPSAVLANGGKMPFTMPEAFLDDGDMVLGDELDDLLDSAPETNETVMPSALVRGPLQTASVSPSMPFSASLLGTLPIGARYAPPPSFSEFYPPLTSSLEDFCSSLNSFSMSESKRDLSTSTSREGTPLNNSNSSLLLMNGPGSLFASENFLGISSQPRNDFGNFFGSAVTKPSSSVTPRHPLEGTHELRQACQICFVKSGPKLMDFTYHANIDHKCKKDILIGRIKNVEDKSWKKIRPRPTKTNYEGPYYICKDVAAEEECRYSGHCTFAYCQEEIDVWTLERKGAFSREAFFGGNGKINLTVFKLLQEHLGEFIFLCEKCFDHKPRMISKRNKDNSTACSHPVTKHEFEDNKCLVHILRETTVKYSKIRSFHGQCQLDLCRHEVRYGCLREDECFYAHSLVELKVWIMQNETGISHDAIAQESKRYWQNLEANVPGAQVLGNQIMPGFLNMKIKFVCAQCLRNGQVIEPDKNRKYCSAKARHSWTKDRRAMRVMSIERKKWMNIRPLPTKKQMPLQFDLCNHIASGKKCQYVGNCSFAHSPEEREVWTYMKENGIQDMEQFYELWLKSQKNEKSEDIASQSNKENGKQIHMPTDYAEVTVDFHCWMCGKNCNSEKQWQGHISSEKHKEKVFHTEDDQYCWQHRFPTGYFSICDRYMNGTCPEGNSCKFAHGNAELHEWEERRDALKMKLNKARKDHLIGPNDNDFGKYSFLFKDLN</sequence>
<keyword id="KW-0002">3D-structure</keyword>
<keyword id="KW-0025">Alternative splicing</keyword>
<keyword id="KW-0175">Coiled coil</keyword>
<keyword id="KW-0479">Metal-binding</keyword>
<keyword id="KW-0539">Nucleus</keyword>
<keyword id="KW-0597">Phosphoprotein</keyword>
<keyword id="KW-1267">Proteomics identification</keyword>
<keyword id="KW-1185">Reference proteome</keyword>
<keyword id="KW-0677">Repeat</keyword>
<keyword id="KW-0694">RNA-binding</keyword>
<keyword id="KW-0802">TPR repeat</keyword>
<keyword id="KW-0862">Zinc</keyword>
<keyword id="KW-0863">Zinc-finger</keyword>
<reference key="1">
    <citation type="submission" date="2002-10" db="EMBL/GenBank/DDBJ databases">
        <authorList>
            <person name="Chen L."/>
            <person name="Guo J.H."/>
        </authorList>
    </citation>
    <scope>NUCLEOTIDE SEQUENCE [MRNA] (ISOFORM 1)</scope>
    <source>
        <tissue>Liver</tissue>
    </source>
</reference>
<reference key="2">
    <citation type="journal article" date="2000" name="Genome Res.">
        <title>Cloning and functional analysis of cDNAs with open reading frames for 300 previously undefined genes expressed in CD34+ hematopoietic stem/progenitor cells.</title>
        <authorList>
            <person name="Zhang Q.-H."/>
            <person name="Ye M."/>
            <person name="Wu X.-Y."/>
            <person name="Ren S.-X."/>
            <person name="Zhao M."/>
            <person name="Zhao C.-J."/>
            <person name="Fu G."/>
            <person name="Shen Y."/>
            <person name="Fan H.-Y."/>
            <person name="Lu G."/>
            <person name="Zhong M."/>
            <person name="Xu X.-R."/>
            <person name="Han Z.-G."/>
            <person name="Zhang J.-W."/>
            <person name="Tao J."/>
            <person name="Huang Q.-H."/>
            <person name="Zhou J."/>
            <person name="Hu G.-X."/>
            <person name="Gu J."/>
            <person name="Chen S.-J."/>
            <person name="Chen Z."/>
        </authorList>
    </citation>
    <scope>NUCLEOTIDE SEQUENCE [LARGE SCALE MRNA] (ISOFORM 2)</scope>
    <source>
        <tissue>Umbilical cord blood</tissue>
    </source>
</reference>
<reference key="3">
    <citation type="journal article" date="2004" name="Nat. Genet.">
        <title>Complete sequencing and characterization of 21,243 full-length human cDNAs.</title>
        <authorList>
            <person name="Ota T."/>
            <person name="Suzuki Y."/>
            <person name="Nishikawa T."/>
            <person name="Otsuki T."/>
            <person name="Sugiyama T."/>
            <person name="Irie R."/>
            <person name="Wakamatsu A."/>
            <person name="Hayashi K."/>
            <person name="Sato H."/>
            <person name="Nagai K."/>
            <person name="Kimura K."/>
            <person name="Makita H."/>
            <person name="Sekine M."/>
            <person name="Obayashi M."/>
            <person name="Nishi T."/>
            <person name="Shibahara T."/>
            <person name="Tanaka T."/>
            <person name="Ishii S."/>
            <person name="Yamamoto J."/>
            <person name="Saito K."/>
            <person name="Kawai Y."/>
            <person name="Isono Y."/>
            <person name="Nakamura Y."/>
            <person name="Nagahari K."/>
            <person name="Murakami K."/>
            <person name="Yasuda T."/>
            <person name="Iwayanagi T."/>
            <person name="Wagatsuma M."/>
            <person name="Shiratori A."/>
            <person name="Sudo H."/>
            <person name="Hosoiri T."/>
            <person name="Kaku Y."/>
            <person name="Kodaira H."/>
            <person name="Kondo H."/>
            <person name="Sugawara M."/>
            <person name="Takahashi M."/>
            <person name="Kanda K."/>
            <person name="Yokoi T."/>
            <person name="Furuya T."/>
            <person name="Kikkawa E."/>
            <person name="Omura Y."/>
            <person name="Abe K."/>
            <person name="Kamihara K."/>
            <person name="Katsuta N."/>
            <person name="Sato K."/>
            <person name="Tanikawa M."/>
            <person name="Yamazaki M."/>
            <person name="Ninomiya K."/>
            <person name="Ishibashi T."/>
            <person name="Yamashita H."/>
            <person name="Murakawa K."/>
            <person name="Fujimori K."/>
            <person name="Tanai H."/>
            <person name="Kimata M."/>
            <person name="Watanabe M."/>
            <person name="Hiraoka S."/>
            <person name="Chiba Y."/>
            <person name="Ishida S."/>
            <person name="Ono Y."/>
            <person name="Takiguchi S."/>
            <person name="Watanabe S."/>
            <person name="Yosida M."/>
            <person name="Hotuta T."/>
            <person name="Kusano J."/>
            <person name="Kanehori K."/>
            <person name="Takahashi-Fujii A."/>
            <person name="Hara H."/>
            <person name="Tanase T.-O."/>
            <person name="Nomura Y."/>
            <person name="Togiya S."/>
            <person name="Komai F."/>
            <person name="Hara R."/>
            <person name="Takeuchi K."/>
            <person name="Arita M."/>
            <person name="Imose N."/>
            <person name="Musashino K."/>
            <person name="Yuuki H."/>
            <person name="Oshima A."/>
            <person name="Sasaki N."/>
            <person name="Aotsuka S."/>
            <person name="Yoshikawa Y."/>
            <person name="Matsunawa H."/>
            <person name="Ichihara T."/>
            <person name="Shiohata N."/>
            <person name="Sano S."/>
            <person name="Moriya S."/>
            <person name="Momiyama H."/>
            <person name="Satoh N."/>
            <person name="Takami S."/>
            <person name="Terashima Y."/>
            <person name="Suzuki O."/>
            <person name="Nakagawa S."/>
            <person name="Senoh A."/>
            <person name="Mizoguchi H."/>
            <person name="Goto Y."/>
            <person name="Shimizu F."/>
            <person name="Wakebe H."/>
            <person name="Hishigaki H."/>
            <person name="Watanabe T."/>
            <person name="Sugiyama A."/>
            <person name="Takemoto M."/>
            <person name="Kawakami B."/>
            <person name="Yamazaki M."/>
            <person name="Watanabe K."/>
            <person name="Kumagai A."/>
            <person name="Itakura S."/>
            <person name="Fukuzumi Y."/>
            <person name="Fujimori Y."/>
            <person name="Komiyama M."/>
            <person name="Tashiro H."/>
            <person name="Tanigami A."/>
            <person name="Fujiwara T."/>
            <person name="Ono T."/>
            <person name="Yamada K."/>
            <person name="Fujii Y."/>
            <person name="Ozaki K."/>
            <person name="Hirao M."/>
            <person name="Ohmori Y."/>
            <person name="Kawabata A."/>
            <person name="Hikiji T."/>
            <person name="Kobatake N."/>
            <person name="Inagaki H."/>
            <person name="Ikema Y."/>
            <person name="Okamoto S."/>
            <person name="Okitani R."/>
            <person name="Kawakami T."/>
            <person name="Noguchi S."/>
            <person name="Itoh T."/>
            <person name="Shigeta K."/>
            <person name="Senba T."/>
            <person name="Matsumura K."/>
            <person name="Nakajima Y."/>
            <person name="Mizuno T."/>
            <person name="Morinaga M."/>
            <person name="Sasaki M."/>
            <person name="Togashi T."/>
            <person name="Oyama M."/>
            <person name="Hata H."/>
            <person name="Watanabe M."/>
            <person name="Komatsu T."/>
            <person name="Mizushima-Sugano J."/>
            <person name="Satoh T."/>
            <person name="Shirai Y."/>
            <person name="Takahashi Y."/>
            <person name="Nakagawa K."/>
            <person name="Okumura K."/>
            <person name="Nagase T."/>
            <person name="Nomura N."/>
            <person name="Kikuchi H."/>
            <person name="Masuho Y."/>
            <person name="Yamashita R."/>
            <person name="Nakai K."/>
            <person name="Yada T."/>
            <person name="Nakamura Y."/>
            <person name="Ohara O."/>
            <person name="Isogai T."/>
            <person name="Sugano S."/>
        </authorList>
    </citation>
    <scope>NUCLEOTIDE SEQUENCE [LARGE SCALE MRNA] (ISOFORM 2)</scope>
    <source>
        <tissue>Placenta</tissue>
    </source>
</reference>
<reference key="4">
    <citation type="submission" date="2005-09" db="EMBL/GenBank/DDBJ databases">
        <authorList>
            <person name="Mural R.J."/>
            <person name="Istrail S."/>
            <person name="Sutton G.G."/>
            <person name="Florea L."/>
            <person name="Halpern A.L."/>
            <person name="Mobarry C.M."/>
            <person name="Lippert R."/>
            <person name="Walenz B."/>
            <person name="Shatkay H."/>
            <person name="Dew I."/>
            <person name="Miller J.R."/>
            <person name="Flanigan M.J."/>
            <person name="Edwards N.J."/>
            <person name="Bolanos R."/>
            <person name="Fasulo D."/>
            <person name="Halldorsson B.V."/>
            <person name="Hannenhalli S."/>
            <person name="Turner R."/>
            <person name="Yooseph S."/>
            <person name="Lu F."/>
            <person name="Nusskern D.R."/>
            <person name="Shue B.C."/>
            <person name="Zheng X.H."/>
            <person name="Zhong F."/>
            <person name="Delcher A.L."/>
            <person name="Huson D.H."/>
            <person name="Kravitz S.A."/>
            <person name="Mouchard L."/>
            <person name="Reinert K."/>
            <person name="Remington K.A."/>
            <person name="Clark A.G."/>
            <person name="Waterman M.S."/>
            <person name="Eichler E.E."/>
            <person name="Adams M.D."/>
            <person name="Hunkapiller M.W."/>
            <person name="Myers E.W."/>
            <person name="Venter J.C."/>
        </authorList>
    </citation>
    <scope>NUCLEOTIDE SEQUENCE [LARGE SCALE GENOMIC DNA]</scope>
</reference>
<reference key="5">
    <citation type="journal article" date="2004" name="Genome Res.">
        <title>The status, quality, and expansion of the NIH full-length cDNA project: the Mammalian Gene Collection (MGC).</title>
        <authorList>
            <consortium name="The MGC Project Team"/>
        </authorList>
    </citation>
    <scope>NUCLEOTIDE SEQUENCE [LARGE SCALE MRNA] (ISOFORMS 1 AND 2)</scope>
    <source>
        <tissue>Skeletal muscle</tissue>
        <tissue>Skin</tissue>
    </source>
</reference>
<reference key="6">
    <citation type="journal article" date="2008" name="Proc. Natl. Acad. Sci. U.S.A.">
        <title>A quantitative atlas of mitotic phosphorylation.</title>
        <authorList>
            <person name="Dephoure N."/>
            <person name="Zhou C."/>
            <person name="Villen J."/>
            <person name="Beausoleil S.A."/>
            <person name="Bakalarski C.E."/>
            <person name="Elledge S.J."/>
            <person name="Gygi S.P."/>
        </authorList>
    </citation>
    <scope>IDENTIFICATION BY MASS SPECTROMETRY [LARGE SCALE ANALYSIS]</scope>
    <source>
        <tissue>Cervix carcinoma</tissue>
    </source>
</reference>
<reference key="7">
    <citation type="journal article" date="2010" name="Sci. Signal.">
        <title>Quantitative phosphoproteomics reveals widespread full phosphorylation site occupancy during mitosis.</title>
        <authorList>
            <person name="Olsen J.V."/>
            <person name="Vermeulen M."/>
            <person name="Santamaria A."/>
            <person name="Kumar C."/>
            <person name="Miller M.L."/>
            <person name="Jensen L.J."/>
            <person name="Gnad F."/>
            <person name="Cox J."/>
            <person name="Jensen T.S."/>
            <person name="Nigg E.A."/>
            <person name="Brunak S."/>
            <person name="Mann M."/>
        </authorList>
    </citation>
    <scope>IDENTIFICATION BY MASS SPECTROMETRY [LARGE SCALE ANALYSIS]</scope>
    <source>
        <tissue>Cervix carcinoma</tissue>
    </source>
</reference>
<reference key="8">
    <citation type="journal article" date="2011" name="BMC Syst. Biol.">
        <title>Initial characterization of the human central proteome.</title>
        <authorList>
            <person name="Burkard T.R."/>
            <person name="Planyavsky M."/>
            <person name="Kaupe I."/>
            <person name="Breitwieser F.P."/>
            <person name="Buerckstuemmer T."/>
            <person name="Bennett K.L."/>
            <person name="Superti-Furga G."/>
            <person name="Colinge J."/>
        </authorList>
    </citation>
    <scope>IDENTIFICATION BY MASS SPECTROMETRY [LARGE SCALE ANALYSIS]</scope>
</reference>
<reference key="9">
    <citation type="journal article" date="2013" name="J. Proteome Res.">
        <title>Toward a comprehensive characterization of a human cancer cell phosphoproteome.</title>
        <authorList>
            <person name="Zhou H."/>
            <person name="Di Palma S."/>
            <person name="Preisinger C."/>
            <person name="Peng M."/>
            <person name="Polat A.N."/>
            <person name="Heck A.J."/>
            <person name="Mohammed S."/>
        </authorList>
    </citation>
    <scope>PHOSPHORYLATION [LARGE SCALE ANALYSIS] AT THR-210</scope>
    <scope>IDENTIFICATION BY MASS SPECTROMETRY [LARGE SCALE ANALYSIS]</scope>
    <source>
        <tissue>Cervix carcinoma</tissue>
        <tissue>Erythroleukemia</tissue>
    </source>
</reference>
<reference key="10">
    <citation type="journal article" date="2014" name="J. Proteomics">
        <title>An enzyme assisted RP-RPLC approach for in-depth analysis of human liver phosphoproteome.</title>
        <authorList>
            <person name="Bian Y."/>
            <person name="Song C."/>
            <person name="Cheng K."/>
            <person name="Dong M."/>
            <person name="Wang F."/>
            <person name="Huang J."/>
            <person name="Sun D."/>
            <person name="Wang L."/>
            <person name="Ye M."/>
            <person name="Zou H."/>
        </authorList>
    </citation>
    <scope>PHOSPHORYLATION [LARGE SCALE ANALYSIS] AT THR-210</scope>
    <scope>IDENTIFICATION BY MASS SPECTROMETRY [LARGE SCALE ANALYSIS]</scope>
    <source>
        <tissue>Liver</tissue>
    </source>
</reference>
<reference key="11">
    <citation type="journal article" date="2017" name="Mol. Cell">
        <title>A Compendium of RNA-Binding Proteins that Regulate MicroRNA Biogenesis.</title>
        <authorList>
            <person name="Treiber T."/>
            <person name="Treiber N."/>
            <person name="Plessmann U."/>
            <person name="Harlander S."/>
            <person name="Daiss J.L."/>
            <person name="Eichner N."/>
            <person name="Lehmann G."/>
            <person name="Schall K."/>
            <person name="Urlaub H."/>
            <person name="Meister G."/>
        </authorList>
    </citation>
    <scope>FUNCTION</scope>
    <scope>MIRNA-BINDING</scope>
</reference>
<reference key="12">
    <citation type="submission" date="2006-06" db="PDB data bank">
        <title>Solution structure of CCCH type zinc-finger domain 3 in zinc finger CCCH-type domain containing 7a.</title>
        <authorList>
            <consortium name="RIKEN structural genomics initiative (RSGI)"/>
        </authorList>
    </citation>
    <scope>STRUCTURE BY NMR OF 892-947</scope>
</reference>
<dbReference type="EMBL" id="AY163807">
    <property type="protein sequence ID" value="AAO06906.1"/>
    <property type="molecule type" value="mRNA"/>
</dbReference>
<dbReference type="EMBL" id="AF161540">
    <property type="protein sequence ID" value="AAF29027.1"/>
    <property type="molecule type" value="mRNA"/>
</dbReference>
<dbReference type="EMBL" id="AK000889">
    <property type="protein sequence ID" value="BAA91408.1"/>
    <property type="molecule type" value="mRNA"/>
</dbReference>
<dbReference type="EMBL" id="AK001869">
    <property type="protein sequence ID" value="BAA91952.1"/>
    <property type="molecule type" value="mRNA"/>
</dbReference>
<dbReference type="EMBL" id="CH471112">
    <property type="protein sequence ID" value="EAW85138.1"/>
    <property type="molecule type" value="Genomic_DNA"/>
</dbReference>
<dbReference type="EMBL" id="CH471112">
    <property type="protein sequence ID" value="EAW85139.1"/>
    <property type="molecule type" value="Genomic_DNA"/>
</dbReference>
<dbReference type="EMBL" id="BC012575">
    <property type="protein sequence ID" value="AAH12575.1"/>
    <property type="molecule type" value="mRNA"/>
</dbReference>
<dbReference type="EMBL" id="BC046363">
    <property type="protein sequence ID" value="AAH46363.1"/>
    <property type="molecule type" value="mRNA"/>
</dbReference>
<dbReference type="CCDS" id="CCDS10550.1">
    <molecule id="Q8IWR0-1"/>
</dbReference>
<dbReference type="RefSeq" id="NP_054872.2">
    <molecule id="Q8IWR0-1"/>
    <property type="nucleotide sequence ID" value="NM_014153.3"/>
</dbReference>
<dbReference type="RefSeq" id="XP_006720940.1">
    <molecule id="Q8IWR0-1"/>
    <property type="nucleotide sequence ID" value="XM_006720877.3"/>
</dbReference>
<dbReference type="RefSeq" id="XP_011520765.1">
    <molecule id="Q8IWR0-1"/>
    <property type="nucleotide sequence ID" value="XM_011522463.3"/>
</dbReference>
<dbReference type="RefSeq" id="XP_047289952.1">
    <molecule id="Q8IWR0-1"/>
    <property type="nucleotide sequence ID" value="XM_047433996.1"/>
</dbReference>
<dbReference type="RefSeq" id="XP_054236128.1">
    <molecule id="Q8IWR0-1"/>
    <property type="nucleotide sequence ID" value="XM_054380153.1"/>
</dbReference>
<dbReference type="RefSeq" id="XP_054236129.1">
    <molecule id="Q8IWR0-1"/>
    <property type="nucleotide sequence ID" value="XM_054380154.1"/>
</dbReference>
<dbReference type="RefSeq" id="XP_054236130.1">
    <molecule id="Q8IWR0-1"/>
    <property type="nucleotide sequence ID" value="XM_054380155.1"/>
</dbReference>
<dbReference type="PDB" id="2D9M">
    <property type="method" value="NMR"/>
    <property type="chains" value="A=892-947"/>
</dbReference>
<dbReference type="PDBsum" id="2D9M"/>
<dbReference type="SMR" id="Q8IWR0"/>
<dbReference type="BioGRID" id="118841">
    <property type="interactions" value="225"/>
</dbReference>
<dbReference type="FunCoup" id="Q8IWR0">
    <property type="interactions" value="1715"/>
</dbReference>
<dbReference type="IntAct" id="Q8IWR0">
    <property type="interactions" value="25"/>
</dbReference>
<dbReference type="MINT" id="Q8IWR0"/>
<dbReference type="STRING" id="9606.ENSP00000379773"/>
<dbReference type="GlyGen" id="Q8IWR0">
    <property type="glycosylation" value="2 sites, 1 O-linked glycan (2 sites)"/>
</dbReference>
<dbReference type="iPTMnet" id="Q8IWR0"/>
<dbReference type="PhosphoSitePlus" id="Q8IWR0"/>
<dbReference type="BioMuta" id="ZC3H7A"/>
<dbReference type="DMDM" id="68566208"/>
<dbReference type="jPOST" id="Q8IWR0"/>
<dbReference type="MassIVE" id="Q8IWR0"/>
<dbReference type="PaxDb" id="9606-ENSP00000379773"/>
<dbReference type="PeptideAtlas" id="Q8IWR0"/>
<dbReference type="ProteomicsDB" id="70882">
    <molecule id="Q8IWR0-1"/>
</dbReference>
<dbReference type="ProteomicsDB" id="70883">
    <molecule id="Q8IWR0-2"/>
</dbReference>
<dbReference type="Pumba" id="Q8IWR0"/>
<dbReference type="Antibodypedia" id="24731">
    <property type="antibodies" value="136 antibodies from 23 providers"/>
</dbReference>
<dbReference type="DNASU" id="29066"/>
<dbReference type="Ensembl" id="ENST00000355758.9">
    <molecule id="Q8IWR0-1"/>
    <property type="protein sequence ID" value="ENSP00000347999.4"/>
    <property type="gene ID" value="ENSG00000122299.12"/>
</dbReference>
<dbReference type="Ensembl" id="ENST00000396516.6">
    <molecule id="Q8IWR0-1"/>
    <property type="protein sequence ID" value="ENSP00000379773.2"/>
    <property type="gene ID" value="ENSG00000122299.12"/>
</dbReference>
<dbReference type="Ensembl" id="ENST00000575984.1">
    <molecule id="Q8IWR0-2"/>
    <property type="protein sequence ID" value="ENSP00000459477.1"/>
    <property type="gene ID" value="ENSG00000122299.12"/>
</dbReference>
<dbReference type="GeneID" id="29066"/>
<dbReference type="KEGG" id="hsa:29066"/>
<dbReference type="MANE-Select" id="ENST00000355758.9">
    <property type="protein sequence ID" value="ENSP00000347999.4"/>
    <property type="RefSeq nucleotide sequence ID" value="NM_014153.4"/>
    <property type="RefSeq protein sequence ID" value="NP_054872.2"/>
</dbReference>
<dbReference type="UCSC" id="uc002dbl.4">
    <molecule id="Q8IWR0-1"/>
    <property type="organism name" value="human"/>
</dbReference>
<dbReference type="AGR" id="HGNC:30959"/>
<dbReference type="CTD" id="29066"/>
<dbReference type="DisGeNET" id="29066"/>
<dbReference type="GeneCards" id="ZC3H7A"/>
<dbReference type="HGNC" id="HGNC:30959">
    <property type="gene designation" value="ZC3H7A"/>
</dbReference>
<dbReference type="HPA" id="ENSG00000122299">
    <property type="expression patterns" value="Low tissue specificity"/>
</dbReference>
<dbReference type="MIM" id="619819">
    <property type="type" value="gene"/>
</dbReference>
<dbReference type="neXtProt" id="NX_Q8IWR0"/>
<dbReference type="OpenTargets" id="ENSG00000122299"/>
<dbReference type="PharmGKB" id="PA128394652"/>
<dbReference type="VEuPathDB" id="HostDB:ENSG00000122299"/>
<dbReference type="eggNOG" id="ENOG502QSHP">
    <property type="taxonomic scope" value="Eukaryota"/>
</dbReference>
<dbReference type="GeneTree" id="ENSGT00390000018542"/>
<dbReference type="HOGENOM" id="CLU_135703_0_0_1"/>
<dbReference type="InParanoid" id="Q8IWR0"/>
<dbReference type="OMA" id="ICERYMN"/>
<dbReference type="OrthoDB" id="433738at2759"/>
<dbReference type="PAN-GO" id="Q8IWR0">
    <property type="GO annotations" value="2 GO annotations based on evolutionary models"/>
</dbReference>
<dbReference type="PhylomeDB" id="Q8IWR0"/>
<dbReference type="TreeFam" id="TF329017"/>
<dbReference type="PathwayCommons" id="Q8IWR0"/>
<dbReference type="SignaLink" id="Q8IWR0"/>
<dbReference type="BioGRID-ORCS" id="29066">
    <property type="hits" value="28 hits in 1168 CRISPR screens"/>
</dbReference>
<dbReference type="CD-CODE" id="DEE660B4">
    <property type="entry name" value="Stress granule"/>
</dbReference>
<dbReference type="ChiTaRS" id="ZC3H7A">
    <property type="organism name" value="human"/>
</dbReference>
<dbReference type="EvolutionaryTrace" id="Q8IWR0"/>
<dbReference type="GenomeRNAi" id="29066"/>
<dbReference type="Pharos" id="Q8IWR0">
    <property type="development level" value="Tbio"/>
</dbReference>
<dbReference type="PRO" id="PR:Q8IWR0"/>
<dbReference type="Proteomes" id="UP000005640">
    <property type="component" value="Chromosome 16"/>
</dbReference>
<dbReference type="RNAct" id="Q8IWR0">
    <property type="molecule type" value="protein"/>
</dbReference>
<dbReference type="Bgee" id="ENSG00000122299">
    <property type="expression patterns" value="Expressed in calcaneal tendon and 200 other cell types or tissues"/>
</dbReference>
<dbReference type="ExpressionAtlas" id="Q8IWR0">
    <property type="expression patterns" value="baseline and differential"/>
</dbReference>
<dbReference type="GO" id="GO:0005634">
    <property type="term" value="C:nucleus"/>
    <property type="evidence" value="ECO:0007669"/>
    <property type="project" value="UniProtKB-SubCell"/>
</dbReference>
<dbReference type="GO" id="GO:0035198">
    <property type="term" value="F:miRNA binding"/>
    <property type="evidence" value="ECO:0000314"/>
    <property type="project" value="UniProtKB"/>
</dbReference>
<dbReference type="GO" id="GO:0003723">
    <property type="term" value="F:RNA binding"/>
    <property type="evidence" value="ECO:0007005"/>
    <property type="project" value="UniProtKB"/>
</dbReference>
<dbReference type="GO" id="GO:0008270">
    <property type="term" value="F:zinc ion binding"/>
    <property type="evidence" value="ECO:0007669"/>
    <property type="project" value="UniProtKB-KW"/>
</dbReference>
<dbReference type="GO" id="GO:0035196">
    <property type="term" value="P:miRNA processing"/>
    <property type="evidence" value="ECO:0000315"/>
    <property type="project" value="UniProtKB"/>
</dbReference>
<dbReference type="GO" id="GO:0010608">
    <property type="term" value="P:post-transcriptional regulation of gene expression"/>
    <property type="evidence" value="ECO:0000315"/>
    <property type="project" value="UniProtKB"/>
</dbReference>
<dbReference type="FunFam" id="1.25.40.10:FF:000070">
    <property type="entry name" value="zinc finger CCCH domain-containing protein 7B"/>
    <property type="match status" value="1"/>
</dbReference>
<dbReference type="Gene3D" id="3.30.160.60">
    <property type="entry name" value="Classic Zinc Finger"/>
    <property type="match status" value="1"/>
</dbReference>
<dbReference type="Gene3D" id="1.25.40.10">
    <property type="entry name" value="Tetratricopeptide repeat domain"/>
    <property type="match status" value="1"/>
</dbReference>
<dbReference type="Gene3D" id="4.10.1000.10">
    <property type="entry name" value="Zinc finger, CCCH-type"/>
    <property type="match status" value="1"/>
</dbReference>
<dbReference type="InterPro" id="IPR011990">
    <property type="entry name" value="TPR-like_helical_dom_sf"/>
</dbReference>
<dbReference type="InterPro" id="IPR039691">
    <property type="entry name" value="ZC3H7A/B"/>
</dbReference>
<dbReference type="InterPro" id="IPR036236">
    <property type="entry name" value="Znf_C2H2_sf"/>
</dbReference>
<dbReference type="InterPro" id="IPR000571">
    <property type="entry name" value="Znf_CCCH"/>
</dbReference>
<dbReference type="InterPro" id="IPR036855">
    <property type="entry name" value="Znf_CCCH_sf"/>
</dbReference>
<dbReference type="PANTHER" id="PTHR14928">
    <property type="entry name" value="MICRO-RNA BINDING ZINC FINGER CCCH DOMAIN-CONTAINING PROTEIN 7"/>
    <property type="match status" value="1"/>
</dbReference>
<dbReference type="PANTHER" id="PTHR14928:SF13">
    <property type="entry name" value="ZINC FINGER CCCH DOMAIN-CONTAINING PROTEIN 7A"/>
    <property type="match status" value="1"/>
</dbReference>
<dbReference type="Pfam" id="PF00642">
    <property type="entry name" value="zf-CCCH"/>
    <property type="match status" value="1"/>
</dbReference>
<dbReference type="SMART" id="SM00356">
    <property type="entry name" value="ZnF_C3H1"/>
    <property type="match status" value="3"/>
</dbReference>
<dbReference type="SUPFAM" id="SSF57667">
    <property type="entry name" value="beta-beta-alpha zinc fingers"/>
    <property type="match status" value="1"/>
</dbReference>
<dbReference type="SUPFAM" id="SSF90229">
    <property type="entry name" value="CCCH zinc finger"/>
    <property type="match status" value="2"/>
</dbReference>
<dbReference type="SUPFAM" id="SSF48452">
    <property type="entry name" value="TPR-like"/>
    <property type="match status" value="1"/>
</dbReference>
<dbReference type="PROSITE" id="PS50103">
    <property type="entry name" value="ZF_C3H1"/>
    <property type="match status" value="3"/>
</dbReference>
<dbReference type="PROSITE" id="PS00028">
    <property type="entry name" value="ZINC_FINGER_C2H2_1"/>
    <property type="match status" value="1"/>
</dbReference>
<proteinExistence type="evidence at protein level"/>
<accession>Q8IWR0</accession>
<accession>D3DUG5</accession>
<accession>Q9NPE9</accession>
<comment type="function">
    <text evidence="3">May be a specific regulator of miRNA biogenesis. Binds to microRNAs MIR7-1, MIR16-2 and MIR29A hairpins recognizing the 3'-ATA(A/T)-5' motif in the apical loop.</text>
</comment>
<comment type="interaction">
    <interactant intactId="EBI-12242934">
        <id>Q8IWR0-2</id>
    </interactant>
    <interactant intactId="EBI-10288852">
        <id>Q9UBU8-2</id>
        <label>MORF4L1</label>
    </interactant>
    <organismsDiffer>false</organismsDiffer>
    <experiments>3</experiments>
</comment>
<comment type="subcellular location">
    <subcellularLocation>
        <location evidence="7">Nucleus</location>
    </subcellularLocation>
</comment>
<comment type="alternative products">
    <event type="alternative splicing"/>
    <isoform>
        <id>Q8IWR0-1</id>
        <name>1</name>
        <sequence type="displayed"/>
    </isoform>
    <isoform>
        <id>Q8IWR0-2</id>
        <name>2</name>
        <sequence type="described" ref="VSP_014383"/>
    </isoform>
</comment>
<protein>
    <recommendedName>
        <fullName>Zinc finger CCCH domain-containing protein 7A</fullName>
    </recommendedName>
</protein>
<organism>
    <name type="scientific">Homo sapiens</name>
    <name type="common">Human</name>
    <dbReference type="NCBI Taxonomy" id="9606"/>
    <lineage>
        <taxon>Eukaryota</taxon>
        <taxon>Metazoa</taxon>
        <taxon>Chordata</taxon>
        <taxon>Craniata</taxon>
        <taxon>Vertebrata</taxon>
        <taxon>Euteleostomi</taxon>
        <taxon>Mammalia</taxon>
        <taxon>Eutheria</taxon>
        <taxon>Euarchontoglires</taxon>
        <taxon>Primates</taxon>
        <taxon>Haplorrhini</taxon>
        <taxon>Catarrhini</taxon>
        <taxon>Hominidae</taxon>
        <taxon>Homo</taxon>
    </lineage>
</organism>
<name>Z3H7A_HUMAN</name>
<gene>
    <name type="primary">ZC3H7A</name>
    <name type="synonym">ZC3H7</name>
    <name type="synonym">ZC3HDC7</name>
    <name type="ORF">HSPC055</name>
</gene>
<feature type="chain" id="PRO_0000106321" description="Zinc finger CCCH domain-containing protein 7A">
    <location>
        <begin position="1"/>
        <end position="971"/>
    </location>
</feature>
<feature type="repeat" description="TPR 1">
    <location>
        <begin position="43"/>
        <end position="76"/>
    </location>
</feature>
<feature type="repeat" description="TPR 2">
    <location>
        <begin position="89"/>
        <end position="122"/>
    </location>
</feature>
<feature type="repeat" description="TPR 3">
    <location>
        <begin position="124"/>
        <end position="156"/>
    </location>
</feature>
<feature type="zinc finger region" description="C3H1-type 1" evidence="2">
    <location>
        <begin position="634"/>
        <end position="656"/>
    </location>
</feature>
<feature type="zinc finger region" description="C3H1-type 2" evidence="2">
    <location>
        <begin position="769"/>
        <end position="797"/>
    </location>
</feature>
<feature type="zinc finger region" description="C2H2-type">
    <location>
        <begin position="857"/>
        <end position="881"/>
    </location>
</feature>
<feature type="zinc finger region" description="C3H1-type 3" evidence="2">
    <location>
        <begin position="906"/>
        <end position="928"/>
    </location>
</feature>
<feature type="coiled-coil region" evidence="1">
    <location>
        <begin position="924"/>
        <end position="952"/>
    </location>
</feature>
<feature type="modified residue" description="Phosphothreonine" evidence="8 9">
    <location>
        <position position="210"/>
    </location>
</feature>
<feature type="splice variant" id="VSP_014383" description="In isoform 2." evidence="4 5 6">
    <location>
        <begin position="1"/>
        <end position="804"/>
    </location>
</feature>
<feature type="sequence variant" id="VAR_052632" description="In dbSNP:rs1429077.">
    <original>N</original>
    <variation>S</variation>
    <location>
        <position position="3"/>
    </location>
</feature>
<feature type="sequence variant" id="VAR_052633" description="In dbSNP:rs16958654.">
    <original>H</original>
    <variation>R</variation>
    <location>
        <position position="57"/>
    </location>
</feature>
<feature type="helix" evidence="10">
    <location>
        <begin position="908"/>
        <end position="912"/>
    </location>
</feature>
<feature type="strand" evidence="10">
    <location>
        <begin position="922"/>
        <end position="926"/>
    </location>
</feature>
<feature type="helix" evidence="10">
    <location>
        <begin position="927"/>
        <end position="940"/>
    </location>
</feature>
<feature type="turn" evidence="10">
    <location>
        <begin position="941"/>
        <end position="943"/>
    </location>
</feature>
<evidence type="ECO:0000255" key="1"/>
<evidence type="ECO:0000255" key="2">
    <source>
        <dbReference type="PROSITE-ProRule" id="PRU00723"/>
    </source>
</evidence>
<evidence type="ECO:0000269" key="3">
    <source>
    </source>
</evidence>
<evidence type="ECO:0000303" key="4">
    <source>
    </source>
</evidence>
<evidence type="ECO:0000303" key="5">
    <source>
    </source>
</evidence>
<evidence type="ECO:0000303" key="6">
    <source>
    </source>
</evidence>
<evidence type="ECO:0000305" key="7"/>
<evidence type="ECO:0007744" key="8">
    <source>
    </source>
</evidence>
<evidence type="ECO:0007744" key="9">
    <source>
    </source>
</evidence>
<evidence type="ECO:0007829" key="10">
    <source>
        <dbReference type="PDB" id="2D9M"/>
    </source>
</evidence>